<keyword id="KW-0007">Acetylation</keyword>
<keyword id="KW-0067">ATP-binding</keyword>
<keyword id="KW-0963">Cytoplasm</keyword>
<keyword id="KW-0206">Cytoskeleton</keyword>
<keyword id="KW-0903">Direct protein sequencing</keyword>
<keyword id="KW-0378">Hydrolase</keyword>
<keyword id="KW-0488">Methylation</keyword>
<keyword id="KW-0547">Nucleotide-binding</keyword>
<keyword id="KW-0539">Nucleus</keyword>
<keyword id="KW-0558">Oxidation</keyword>
<keyword id="KW-0832">Ubl conjugation</keyword>
<accession>P84336</accession>
<gene>
    <name type="primary">ACTB</name>
</gene>
<proteinExistence type="evidence at protein level"/>
<evidence type="ECO:0000250" key="1">
    <source>
        <dbReference type="UniProtKB" id="O18840"/>
    </source>
</evidence>
<evidence type="ECO:0000250" key="2">
    <source>
        <dbReference type="UniProtKB" id="P60709"/>
    </source>
</evidence>
<evidence type="ECO:0000250" key="3">
    <source>
        <dbReference type="UniProtKB" id="P60710"/>
    </source>
</evidence>
<evidence type="ECO:0000250" key="4">
    <source>
        <dbReference type="UniProtKB" id="P68137"/>
    </source>
</evidence>
<evidence type="ECO:0000250" key="5">
    <source>
        <dbReference type="UniProtKB" id="Q6QAQ1"/>
    </source>
</evidence>
<evidence type="ECO:0000269" key="6">
    <source ref="1"/>
</evidence>
<evidence type="ECO:0000305" key="7"/>
<organism>
    <name type="scientific">Camelus dromedarius</name>
    <name type="common">Dromedary</name>
    <name type="synonym">Arabian camel</name>
    <dbReference type="NCBI Taxonomy" id="9838"/>
    <lineage>
        <taxon>Eukaryota</taxon>
        <taxon>Metazoa</taxon>
        <taxon>Chordata</taxon>
        <taxon>Craniata</taxon>
        <taxon>Vertebrata</taxon>
        <taxon>Euteleostomi</taxon>
        <taxon>Mammalia</taxon>
        <taxon>Eutheria</taxon>
        <taxon>Laurasiatheria</taxon>
        <taxon>Artiodactyla</taxon>
        <taxon>Tylopoda</taxon>
        <taxon>Camelidae</taxon>
        <taxon>Camelus</taxon>
    </lineage>
</organism>
<protein>
    <recommendedName>
        <fullName>Actin, cytoplasmic 1</fullName>
        <ecNumber evidence="4">3.6.4.-</ecNumber>
    </recommendedName>
    <alternativeName>
        <fullName>Beta-actin</fullName>
    </alternativeName>
    <component>
        <recommendedName>
            <fullName>Actin, cytoplasmic 1, N-terminally processed</fullName>
        </recommendedName>
    </component>
</protein>
<reference evidence="7" key="1">
    <citation type="thesis" date="2004" institute="ISBM" country="Tunisia">
        <title>Biochemical characterization of Dromedary skeletal actin protein.</title>
        <authorList>
            <person name="Sboui H."/>
        </authorList>
    </citation>
    <scope>PROTEIN SEQUENCE</scope>
    <scope>MASS SPECTROMETRY</scope>
    <source>
        <tissue evidence="6">Skeletal muscle</tissue>
    </source>
</reference>
<sequence>MDDDIAALVVDNGSGMCKAGFAGDDAPRAVFPSIVGRPRHQGVMVGMGQKDSYVGDEAQSKRCILTLKYPIERGIVTNWDDMEKIWHHTFYNELRVAPEEHPVLLTEAPLNPKANREKMTQIMFETFNTPAMYVAIQAVLSLYASGRTTGIVMDSGDGVTHTVPIYEGYALPHAILRLDLAGRDLTDYLMKILTERGYSFTTTAEREIVRDIKEKLCYVALDFEQEMATAASSSSLEKSYELPDGQVITIGNERFRCPEALFQPSFLGMESCGIHETTFNSIMKCDVDIRKDLYANTVLSGGTTMYPGIADRMQKEITALAPSTMKIKIIAPPERKYSVWIGGSILASLSTFQQMWISKQEYDESGPSIVHRKCF</sequence>
<name>ACTB_CAMDR</name>
<feature type="chain" id="PRO_0000000759" description="Actin, cytoplasmic 1">
    <location>
        <begin position="1"/>
        <end position="375"/>
    </location>
</feature>
<feature type="initiator methionine" description="Removed; alternate" evidence="2">
    <location>
        <position position="1"/>
    </location>
</feature>
<feature type="chain" id="PRO_0000367067" description="Actin, cytoplasmic 1, N-terminally processed">
    <location>
        <begin position="2"/>
        <end position="375"/>
    </location>
</feature>
<feature type="modified residue" description="N-acetylmethionine" evidence="2">
    <location>
        <position position="1"/>
    </location>
</feature>
<feature type="modified residue" description="N-acetylaspartate; in Actin, cytoplasmic 1, N-terminally processed" evidence="2">
    <location>
        <position position="2"/>
    </location>
</feature>
<feature type="modified residue" description="Methionine (R)-sulfoxide" evidence="3">
    <location>
        <position position="44"/>
    </location>
</feature>
<feature type="modified residue" description="Methionine (R)-sulfoxide" evidence="3">
    <location>
        <position position="47"/>
    </location>
</feature>
<feature type="modified residue" description="N6-methyllysine" evidence="2">
    <location>
        <position position="84"/>
    </location>
</feature>
<comment type="function">
    <text evidence="2 5">Actin is a highly conserved protein that polymerizes to produce filaments that form cross-linked networks in the cytoplasm of cells (By similarity). Actin exists in both monomeric (G-actin) and polymeric (F-actin) forms, both forms playing key functions, such as cell motility and contraction (By similarity). In addition to their role in the cytoplasmic cytoskeleton, G- and F-actin also localize in the nucleus, and regulate gene transcription and motility and repair of damaged DNA (By similarity). Plays a role in the assembly of the gamma-tubulin ring complex (gTuRC), which regulates the minus-end nucleation of alpha-beta tubulin heterodimers that grow into microtubule protafilaments (By similarity). Part of the ACTR1A/ACTB filament around which the dynactin complex is built (By similarity). The dynactin multiprotein complex activates the molecular motor dynein for ultra-processive transport along microtubules (By similarity).</text>
</comment>
<comment type="catalytic activity">
    <reaction evidence="4">
        <text>ATP + H2O = ADP + phosphate + H(+)</text>
        <dbReference type="Rhea" id="RHEA:13065"/>
        <dbReference type="ChEBI" id="CHEBI:15377"/>
        <dbReference type="ChEBI" id="CHEBI:15378"/>
        <dbReference type="ChEBI" id="CHEBI:30616"/>
        <dbReference type="ChEBI" id="CHEBI:43474"/>
        <dbReference type="ChEBI" id="CHEBI:456216"/>
    </reaction>
</comment>
<comment type="subunit">
    <text evidence="1 2 3 5">Polymerization of globular actin (G-actin) leads to a structural filament (F-actin) in the form of a two-stranded helix (By similarity). Each actin can bind to 4 others (By similarity). Identified in a IGF2BP1-dependent mRNP granule complex containing untranslated mRNAs (By similarity). Component of the BAF complex, which includes at least actin (ACTB), ARID1A, ARID1B/BAF250, SMARCA2, SMARCA4/BRG1, ACTL6A/BAF53, ACTL6B/BAF53B, SMARCE1/BAF57 SMARCC1/BAF155, SMARCC2/BAF170, SMARCB1/SNF5/INI1, and one or more of SMARCD1/BAF60A, SMARCD2/BAF60B, or SMARCD3/BAF60C (By similarity). In muscle cells, the BAF complex also contains DPF3 (By similarity). Found in a complex with XPO6, Ran, ACTB and PFN1 (By similarity). Interacts with PFN1 (By similarity). Interacts with XPO6 and EMD (By similarity). Interacts with ERBB2 (By similarity). Interacts with GCSAM (By similarity). Interacts with TBC1D21 (By similarity). Interacts with CPNE1 (via VWFA domain) and CPNE4 (via VWFA domain) (By similarity). Interacts with DHX9 (via C-terminus); this interaction is direct and mediates the attachment to nuclear ribonucleoprotein complexes (By similarity). Interacts with FAM107A (By similarity). Associates with the gamma-tubulin ring complex (gTuRC) consisting of TUBGCP2, TUBGCP3, TUBGCP4, TUBGCP5 and TUBGCP6 and gamma-tubulin TUBG1 or TUBG2; within the complex, interacts with TUBGCP3 and TUBGCP6 to form a luminal bridge with MZT1 that stabilizes the initial structure during complex assembly (By similarity). Part of the ACTR1A/ACTB filament around which the dynactin complex is built (By similarity). The filament contains 8 copies of ACTR1A and 1 ACTB (By similarity). Interacts with TPRN which forms ring-like structures in the stereocilium taper region; the interaction may stabilize stereocilia in inner ear hair cells (By similarity). Interacts with AMOTL2 (via N-terminus), the interaction facilitates binding of cell junction complexes to actin fibers in endothelial cells (By similarity).</text>
</comment>
<comment type="subcellular location">
    <subcellularLocation>
        <location evidence="2">Cytoplasm</location>
        <location evidence="2">Cytoskeleton</location>
    </subcellularLocation>
    <subcellularLocation>
        <location evidence="2">Nucleus</location>
    </subcellularLocation>
    <text evidence="2">Localized in cytoplasmic mRNP granules containing untranslated mRNAs.</text>
</comment>
<comment type="PTM">
    <molecule>Actin, cytoplasmic 1</molecule>
    <text evidence="2">N-terminal cleavage of acetylated methionine of immature cytoplasmic actin by ACTMAP.</text>
</comment>
<comment type="PTM">
    <text evidence="2">ISGylated.</text>
</comment>
<comment type="PTM">
    <text evidence="3">Oxidation of Met-44 and Met-47 by MICALs (MICAL1, MICAL2 or MICAL3) to form methionine sulfoxide promotes actin filament depolymerization. MICAL1 and MICAL2 produce the (R)-S-oxide form. The (R)-S-oxide form is reverted by MSRB1 and MSRB2, which promote actin repolymerization.</text>
</comment>
<comment type="PTM">
    <text evidence="2">Monomethylation at Lys-84 (K84me1) regulates actin-myosin interaction and actomyosin-dependent processes. Demethylation by ALKBH4 is required for maintaining actomyosin dynamics supporting normal cleavage furrow ingression during cytokinesis and cell migration.</text>
</comment>
<comment type="PTM">
    <molecule>Actin, cytoplasmic 1, N-terminally processed</molecule>
    <text evidence="2">N-terminal acetylation by NAA80 affects actin filament depolymerization and elongation, including elongation driven by formins. In contrast, filament nucleation by the Arp2/3 complex is not affected.</text>
</comment>
<comment type="mass spectrometry">
    <molecule>Actin, cytoplasmic 1</molecule>
</comment>
<comment type="miscellaneous">
    <text evidence="2">In vertebrates 3 main groups of actin isoforms, alpha, beta and gamma have been identified. The alpha actins are found in muscle tissues and are a major constituent of the contractile apparatus. The beta and gamma actins coexist in most cell types as components of the cytoskeleton and as mediators of internal cell motility.</text>
</comment>
<comment type="similarity">
    <text evidence="7">Belongs to the actin family.</text>
</comment>
<dbReference type="EC" id="3.6.4.-" evidence="4"/>
<dbReference type="SMR" id="P84336"/>
<dbReference type="STRING" id="9838.ENSCDRP00005026436"/>
<dbReference type="GO" id="GO:0015629">
    <property type="term" value="C:actin cytoskeleton"/>
    <property type="evidence" value="ECO:0000250"/>
    <property type="project" value="UniProtKB"/>
</dbReference>
<dbReference type="GO" id="GO:0005856">
    <property type="term" value="C:cytoskeleton"/>
    <property type="evidence" value="ECO:0000250"/>
    <property type="project" value="AgBase"/>
</dbReference>
<dbReference type="GO" id="GO:0097433">
    <property type="term" value="C:dense body"/>
    <property type="evidence" value="ECO:0000250"/>
    <property type="project" value="AgBase"/>
</dbReference>
<dbReference type="GO" id="GO:0005925">
    <property type="term" value="C:focal adhesion"/>
    <property type="evidence" value="ECO:0000250"/>
    <property type="project" value="AgBase"/>
</dbReference>
<dbReference type="GO" id="GO:0005634">
    <property type="term" value="C:nucleus"/>
    <property type="evidence" value="ECO:0000250"/>
    <property type="project" value="UniProtKB"/>
</dbReference>
<dbReference type="GO" id="GO:0005886">
    <property type="term" value="C:plasma membrane"/>
    <property type="evidence" value="ECO:0000250"/>
    <property type="project" value="AgBase"/>
</dbReference>
<dbReference type="GO" id="GO:0032991">
    <property type="term" value="C:protein-containing complex"/>
    <property type="evidence" value="ECO:0000250"/>
    <property type="project" value="UniProtKB"/>
</dbReference>
<dbReference type="GO" id="GO:0005524">
    <property type="term" value="F:ATP binding"/>
    <property type="evidence" value="ECO:0007669"/>
    <property type="project" value="UniProtKB-KW"/>
</dbReference>
<dbReference type="GO" id="GO:0016787">
    <property type="term" value="F:hydrolase activity"/>
    <property type="evidence" value="ECO:0007669"/>
    <property type="project" value="UniProtKB-KW"/>
</dbReference>
<dbReference type="CDD" id="cd10224">
    <property type="entry name" value="ASKHA_NBD_actin"/>
    <property type="match status" value="1"/>
</dbReference>
<dbReference type="FunFam" id="2.30.36.70:FF:000001">
    <property type="entry name" value="Actin, alpha skeletal muscle"/>
    <property type="match status" value="1"/>
</dbReference>
<dbReference type="FunFam" id="3.30.420.40:FF:000131">
    <property type="entry name" value="Actin, alpha skeletal muscle"/>
    <property type="match status" value="1"/>
</dbReference>
<dbReference type="FunFam" id="3.30.420.40:FF:000291">
    <property type="entry name" value="Actin, alpha skeletal muscle"/>
    <property type="match status" value="1"/>
</dbReference>
<dbReference type="FunFam" id="3.90.640.10:FF:000047">
    <property type="entry name" value="Actin, alpha skeletal muscle"/>
    <property type="match status" value="1"/>
</dbReference>
<dbReference type="FunFam" id="3.30.420.40:FF:000058">
    <property type="entry name" value="Putative actin-related protein 5"/>
    <property type="match status" value="1"/>
</dbReference>
<dbReference type="Gene3D" id="3.30.420.40">
    <property type="match status" value="2"/>
</dbReference>
<dbReference type="Gene3D" id="3.90.640.10">
    <property type="entry name" value="Actin, Chain A, domain 4"/>
    <property type="match status" value="1"/>
</dbReference>
<dbReference type="InterPro" id="IPR004000">
    <property type="entry name" value="Actin"/>
</dbReference>
<dbReference type="InterPro" id="IPR020902">
    <property type="entry name" value="Actin/actin-like_CS"/>
</dbReference>
<dbReference type="InterPro" id="IPR004001">
    <property type="entry name" value="Actin_CS"/>
</dbReference>
<dbReference type="InterPro" id="IPR043129">
    <property type="entry name" value="ATPase_NBD"/>
</dbReference>
<dbReference type="PANTHER" id="PTHR11937">
    <property type="entry name" value="ACTIN"/>
    <property type="match status" value="1"/>
</dbReference>
<dbReference type="Pfam" id="PF00022">
    <property type="entry name" value="Actin"/>
    <property type="match status" value="1"/>
</dbReference>
<dbReference type="PRINTS" id="PR00190">
    <property type="entry name" value="ACTIN"/>
</dbReference>
<dbReference type="SMART" id="SM00268">
    <property type="entry name" value="ACTIN"/>
    <property type="match status" value="1"/>
</dbReference>
<dbReference type="SUPFAM" id="SSF53067">
    <property type="entry name" value="Actin-like ATPase domain"/>
    <property type="match status" value="2"/>
</dbReference>
<dbReference type="PROSITE" id="PS00432">
    <property type="entry name" value="ACTINS_2"/>
    <property type="match status" value="1"/>
</dbReference>
<dbReference type="PROSITE" id="PS01132">
    <property type="entry name" value="ACTINS_ACT_LIKE"/>
    <property type="match status" value="1"/>
</dbReference>